<reference key="1">
    <citation type="journal article" date="2000" name="J. Biol. Chem.">
        <title>V-type H+-ATPase/synthase from a thermophilic eubacterium, Thermus thermophilus. Subunit structure and operon.</title>
        <authorList>
            <person name="Yokoyama K."/>
            <person name="Ohkuma S."/>
            <person name="Taguchi H."/>
            <person name="Yasunaga T."/>
            <person name="Wakabayashi T."/>
            <person name="Yoshida M."/>
        </authorList>
    </citation>
    <scope>NUCLEOTIDE SEQUENCE [GENOMIC DNA]</scope>
</reference>
<reference key="2">
    <citation type="submission" date="2004-11" db="EMBL/GenBank/DDBJ databases">
        <title>Complete genome sequence of Thermus thermophilus HB8.</title>
        <authorList>
            <person name="Masui R."/>
            <person name="Kurokawa K."/>
            <person name="Nakagawa N."/>
            <person name="Tokunaga F."/>
            <person name="Koyama Y."/>
            <person name="Shibata T."/>
            <person name="Oshima T."/>
            <person name="Yokoyama S."/>
            <person name="Yasunaga T."/>
            <person name="Kuramitsu S."/>
        </authorList>
    </citation>
    <scope>NUCLEOTIDE SEQUENCE [LARGE SCALE GENOMIC DNA]</scope>
    <source>
        <strain>ATCC 27634 / DSM 579 / HB8</strain>
    </source>
</reference>
<protein>
    <recommendedName>
        <fullName>V-type ATP synthase subunit F</fullName>
    </recommendedName>
    <alternativeName>
        <fullName>V-ATPase subunit F</fullName>
    </alternativeName>
</protein>
<gene>
    <name type="primary">atpF</name>
    <name type="synonym">vatF</name>
    <name type="ordered locus">TTHA1274</name>
</gene>
<dbReference type="EMBL" id="D63799">
    <property type="protein sequence ID" value="BAA09872.1"/>
    <property type="molecule type" value="Genomic_DNA"/>
</dbReference>
<dbReference type="EMBL" id="AP008226">
    <property type="protein sequence ID" value="BAD71097.1"/>
    <property type="molecule type" value="Genomic_DNA"/>
</dbReference>
<dbReference type="RefSeq" id="WP_011228561.1">
    <property type="nucleotide sequence ID" value="NC_006461.1"/>
</dbReference>
<dbReference type="RefSeq" id="YP_144540.1">
    <property type="nucleotide sequence ID" value="NC_006461.1"/>
</dbReference>
<dbReference type="PDB" id="2D00">
    <property type="method" value="X-ray"/>
    <property type="resolution" value="2.20 A"/>
    <property type="chains" value="A/B/C/D/E/F=1-104"/>
</dbReference>
<dbReference type="PDB" id="3A5C">
    <property type="method" value="X-ray"/>
    <property type="resolution" value="4.51 A"/>
    <property type="chains" value="H/P=1-104"/>
</dbReference>
<dbReference type="PDB" id="3A5D">
    <property type="method" value="X-ray"/>
    <property type="resolution" value="4.80 A"/>
    <property type="chains" value="H/P=1-104"/>
</dbReference>
<dbReference type="PDB" id="3J0J">
    <property type="method" value="EM"/>
    <property type="resolution" value="9.70 A"/>
    <property type="chains" value="H=1-104"/>
</dbReference>
<dbReference type="PDB" id="3W3A">
    <property type="method" value="X-ray"/>
    <property type="resolution" value="3.90 A"/>
    <property type="chains" value="H/P=1-100"/>
</dbReference>
<dbReference type="PDB" id="5GAR">
    <property type="method" value="EM"/>
    <property type="resolution" value="6.40 A"/>
    <property type="chains" value="L=1-100"/>
</dbReference>
<dbReference type="PDB" id="5GAS">
    <property type="method" value="EM"/>
    <property type="resolution" value="9.50 A"/>
    <property type="chains" value="L=1-100"/>
</dbReference>
<dbReference type="PDB" id="5TSJ">
    <property type="method" value="EM"/>
    <property type="resolution" value="8.70 A"/>
    <property type="chains" value="L=1-100"/>
</dbReference>
<dbReference type="PDB" id="5Y5X">
    <property type="method" value="EM"/>
    <property type="resolution" value="5.00 A"/>
    <property type="chains" value="H=1-104"/>
</dbReference>
<dbReference type="PDB" id="5Y5Y">
    <property type="method" value="EM"/>
    <property type="resolution" value="4.70 A"/>
    <property type="chains" value="H=1-104"/>
</dbReference>
<dbReference type="PDB" id="5Y5Z">
    <property type="method" value="EM"/>
    <property type="resolution" value="6.70 A"/>
    <property type="chains" value="H=1-104"/>
</dbReference>
<dbReference type="PDB" id="5Y60">
    <property type="method" value="EM"/>
    <property type="resolution" value="7.50 A"/>
    <property type="chains" value="H=1-104"/>
</dbReference>
<dbReference type="PDB" id="6LY8">
    <property type="method" value="EM"/>
    <property type="resolution" value="3.50 A"/>
    <property type="chains" value="H=1-104"/>
</dbReference>
<dbReference type="PDB" id="6QUM">
    <property type="method" value="EM"/>
    <property type="resolution" value="3.25 A"/>
    <property type="chains" value="H=1-104"/>
</dbReference>
<dbReference type="PDB" id="6R0W">
    <property type="method" value="EM"/>
    <property type="resolution" value="3.60 A"/>
    <property type="chains" value="H=1-104"/>
</dbReference>
<dbReference type="PDB" id="6R0Y">
    <property type="method" value="EM"/>
    <property type="resolution" value="3.90 A"/>
    <property type="chains" value="H=1-104"/>
</dbReference>
<dbReference type="PDB" id="6R0Z">
    <property type="method" value="EM"/>
    <property type="resolution" value="3.80 A"/>
    <property type="chains" value="H=1-104"/>
</dbReference>
<dbReference type="PDB" id="6R10">
    <property type="method" value="EM"/>
    <property type="resolution" value="4.30 A"/>
    <property type="chains" value="H=1-104"/>
</dbReference>
<dbReference type="PDB" id="7VAI">
    <property type="method" value="EM"/>
    <property type="resolution" value="3.10 A"/>
    <property type="chains" value="H=1-104"/>
</dbReference>
<dbReference type="PDB" id="7VAJ">
    <property type="method" value="EM"/>
    <property type="resolution" value="3.10 A"/>
    <property type="chains" value="H=1-104"/>
</dbReference>
<dbReference type="PDB" id="7VAK">
    <property type="method" value="EM"/>
    <property type="resolution" value="4.70 A"/>
    <property type="chains" value="H=1-104"/>
</dbReference>
<dbReference type="PDB" id="7VAL">
    <property type="method" value="EM"/>
    <property type="resolution" value="3.10 A"/>
    <property type="chains" value="H=1-104"/>
</dbReference>
<dbReference type="PDB" id="7VAM">
    <property type="method" value="EM"/>
    <property type="resolution" value="3.20 A"/>
    <property type="chains" value="H=1-104"/>
</dbReference>
<dbReference type="PDB" id="7VAN">
    <property type="method" value="EM"/>
    <property type="resolution" value="3.00 A"/>
    <property type="chains" value="H=1-104"/>
</dbReference>
<dbReference type="PDB" id="7VAO">
    <property type="method" value="EM"/>
    <property type="resolution" value="3.40 A"/>
    <property type="chains" value="H=1-104"/>
</dbReference>
<dbReference type="PDB" id="7VAP">
    <property type="method" value="EM"/>
    <property type="resolution" value="3.00 A"/>
    <property type="chains" value="H=1-104"/>
</dbReference>
<dbReference type="PDB" id="7VAQ">
    <property type="method" value="EM"/>
    <property type="resolution" value="3.60 A"/>
    <property type="chains" value="H=1-104"/>
</dbReference>
<dbReference type="PDB" id="7VAR">
    <property type="method" value="EM"/>
    <property type="resolution" value="2.90 A"/>
    <property type="chains" value="H=1-104"/>
</dbReference>
<dbReference type="PDB" id="7VAS">
    <property type="method" value="EM"/>
    <property type="resolution" value="3.00 A"/>
    <property type="chains" value="H=1-104"/>
</dbReference>
<dbReference type="PDB" id="7VAT">
    <property type="method" value="EM"/>
    <property type="resolution" value="3.20 A"/>
    <property type="chains" value="H=1-104"/>
</dbReference>
<dbReference type="PDB" id="7VAU">
    <property type="method" value="EM"/>
    <property type="resolution" value="3.30 A"/>
    <property type="chains" value="H=1-104"/>
</dbReference>
<dbReference type="PDB" id="7VAV">
    <property type="method" value="EM"/>
    <property type="resolution" value="2.80 A"/>
    <property type="chains" value="H=1-104"/>
</dbReference>
<dbReference type="PDB" id="7VAW">
    <property type="method" value="EM"/>
    <property type="resolution" value="2.70 A"/>
    <property type="chains" value="H=1-104"/>
</dbReference>
<dbReference type="PDB" id="7VAX">
    <property type="method" value="EM"/>
    <property type="resolution" value="2.90 A"/>
    <property type="chains" value="H=1-104"/>
</dbReference>
<dbReference type="PDB" id="7VAY">
    <property type="method" value="EM"/>
    <property type="resolution" value="3.30 A"/>
    <property type="chains" value="H=1-104"/>
</dbReference>
<dbReference type="PDB" id="7VB0">
    <property type="method" value="EM"/>
    <property type="resolution" value="3.60 A"/>
    <property type="chains" value="H=1-104"/>
</dbReference>
<dbReference type="PDB" id="8GXU">
    <property type="method" value="EM"/>
    <property type="resolution" value="2.50 A"/>
    <property type="chains" value="H=1-104"/>
</dbReference>
<dbReference type="PDB" id="8GXW">
    <property type="method" value="EM"/>
    <property type="resolution" value="2.70 A"/>
    <property type="chains" value="H=1-104"/>
</dbReference>
<dbReference type="PDB" id="8GXX">
    <property type="method" value="EM"/>
    <property type="resolution" value="3.00 A"/>
    <property type="chains" value="H=1-104"/>
</dbReference>
<dbReference type="PDB" id="8GXY">
    <property type="method" value="EM"/>
    <property type="resolution" value="2.80 A"/>
    <property type="chains" value="H=1-104"/>
</dbReference>
<dbReference type="PDB" id="8GXZ">
    <property type="method" value="EM"/>
    <property type="resolution" value="3.10 A"/>
    <property type="chains" value="H=1-104"/>
</dbReference>
<dbReference type="PDBsum" id="2D00"/>
<dbReference type="PDBsum" id="3A5C"/>
<dbReference type="PDBsum" id="3A5D"/>
<dbReference type="PDBsum" id="3J0J"/>
<dbReference type="PDBsum" id="3W3A"/>
<dbReference type="PDBsum" id="5GAR"/>
<dbReference type="PDBsum" id="5GAS"/>
<dbReference type="PDBsum" id="5TSJ"/>
<dbReference type="PDBsum" id="5Y5X"/>
<dbReference type="PDBsum" id="5Y5Y"/>
<dbReference type="PDBsum" id="5Y5Z"/>
<dbReference type="PDBsum" id="5Y60"/>
<dbReference type="PDBsum" id="6LY8"/>
<dbReference type="PDBsum" id="6QUM"/>
<dbReference type="PDBsum" id="6R0W"/>
<dbReference type="PDBsum" id="6R0Y"/>
<dbReference type="PDBsum" id="6R0Z"/>
<dbReference type="PDBsum" id="6R10"/>
<dbReference type="PDBsum" id="7VAI"/>
<dbReference type="PDBsum" id="7VAJ"/>
<dbReference type="PDBsum" id="7VAK"/>
<dbReference type="PDBsum" id="7VAL"/>
<dbReference type="PDBsum" id="7VAM"/>
<dbReference type="PDBsum" id="7VAN"/>
<dbReference type="PDBsum" id="7VAO"/>
<dbReference type="PDBsum" id="7VAP"/>
<dbReference type="PDBsum" id="7VAQ"/>
<dbReference type="PDBsum" id="7VAR"/>
<dbReference type="PDBsum" id="7VAS"/>
<dbReference type="PDBsum" id="7VAT"/>
<dbReference type="PDBsum" id="7VAU"/>
<dbReference type="PDBsum" id="7VAV"/>
<dbReference type="PDBsum" id="7VAW"/>
<dbReference type="PDBsum" id="7VAX"/>
<dbReference type="PDBsum" id="7VAY"/>
<dbReference type="PDBsum" id="7VB0"/>
<dbReference type="PDBsum" id="8GXU"/>
<dbReference type="PDBsum" id="8GXW"/>
<dbReference type="PDBsum" id="8GXX"/>
<dbReference type="PDBsum" id="8GXY"/>
<dbReference type="PDBsum" id="8GXZ"/>
<dbReference type="EMDB" id="EMD-30014"/>
<dbReference type="EMDB" id="EMD-31841"/>
<dbReference type="EMDB" id="EMD-31842"/>
<dbReference type="EMDB" id="EMD-31843"/>
<dbReference type="EMDB" id="EMD-31844"/>
<dbReference type="EMDB" id="EMD-31845"/>
<dbReference type="EMDB" id="EMD-31846"/>
<dbReference type="EMDB" id="EMD-31847"/>
<dbReference type="EMDB" id="EMD-31848"/>
<dbReference type="EMDB" id="EMD-31849"/>
<dbReference type="EMDB" id="EMD-31850"/>
<dbReference type="EMDB" id="EMD-31851"/>
<dbReference type="EMDB" id="EMD-31852"/>
<dbReference type="EMDB" id="EMD-31853"/>
<dbReference type="EMDB" id="EMD-31854"/>
<dbReference type="EMDB" id="EMD-31855"/>
<dbReference type="EMDB" id="EMD-31856"/>
<dbReference type="EMDB" id="EMD-31857"/>
<dbReference type="EMDB" id="EMD-31858"/>
<dbReference type="EMDB" id="EMD-31859"/>
<dbReference type="EMDB" id="EMD-31860"/>
<dbReference type="EMDB" id="EMD-31861"/>
<dbReference type="EMDB" id="EMD-31862"/>
<dbReference type="EMDB" id="EMD-31863"/>
<dbReference type="EMDB" id="EMD-31864"/>
<dbReference type="EMDB" id="EMD-31865"/>
<dbReference type="EMDB" id="EMD-31866"/>
<dbReference type="EMDB" id="EMD-31867"/>
<dbReference type="EMDB" id="EMD-31868"/>
<dbReference type="EMDB" id="EMD-31869"/>
<dbReference type="EMDB" id="EMD-31870"/>
<dbReference type="EMDB" id="EMD-31871"/>
<dbReference type="EMDB" id="EMD-31872"/>
<dbReference type="EMDB" id="EMD-31873"/>
<dbReference type="EMDB" id="EMD-34362"/>
<dbReference type="EMDB" id="EMD-34363"/>
<dbReference type="EMDB" id="EMD-34364"/>
<dbReference type="EMDB" id="EMD-34365"/>
<dbReference type="EMDB" id="EMD-34366"/>
<dbReference type="EMDB" id="EMD-4640"/>
<dbReference type="EMDB" id="EMD-4699"/>
<dbReference type="EMDB" id="EMD-4700"/>
<dbReference type="EMDB" id="EMD-4702"/>
<dbReference type="EMDB" id="EMD-4703"/>
<dbReference type="EMDB" id="EMD-6810"/>
<dbReference type="EMDB" id="EMD-6811"/>
<dbReference type="EMDB" id="EMD-6812"/>
<dbReference type="EMDB" id="EMD-6813"/>
<dbReference type="EMDB" id="EMD-8016"/>
<dbReference type="EMDB" id="EMD-8017"/>
<dbReference type="EMDB" id="EMD-8462"/>
<dbReference type="SMR" id="P74903"/>
<dbReference type="IntAct" id="P74903">
    <property type="interactions" value="2"/>
</dbReference>
<dbReference type="MINT" id="P74903"/>
<dbReference type="TCDB" id="3.A.2.2.1">
    <property type="family name" value="the h+- or na+-translocating f-type, v-type and a-type atpase (f-atpase) superfamily"/>
</dbReference>
<dbReference type="EnsemblBacteria" id="BAD71097">
    <property type="protein sequence ID" value="BAD71097"/>
    <property type="gene ID" value="BAD71097"/>
</dbReference>
<dbReference type="GeneID" id="3169040"/>
<dbReference type="KEGG" id="ttj:TTHA1274"/>
<dbReference type="PATRIC" id="fig|300852.9.peg.1253"/>
<dbReference type="eggNOG" id="COG1436">
    <property type="taxonomic scope" value="Bacteria"/>
</dbReference>
<dbReference type="HOGENOM" id="CLU_135754_2_0_0"/>
<dbReference type="EvolutionaryTrace" id="P74903"/>
<dbReference type="Proteomes" id="UP000000532">
    <property type="component" value="Chromosome"/>
</dbReference>
<dbReference type="GO" id="GO:0005524">
    <property type="term" value="F:ATP binding"/>
    <property type="evidence" value="ECO:0007669"/>
    <property type="project" value="UniProtKB-UniRule"/>
</dbReference>
<dbReference type="GO" id="GO:0046933">
    <property type="term" value="F:proton-transporting ATP synthase activity, rotational mechanism"/>
    <property type="evidence" value="ECO:0007669"/>
    <property type="project" value="UniProtKB-UniRule"/>
</dbReference>
<dbReference type="GO" id="GO:0046961">
    <property type="term" value="F:proton-transporting ATPase activity, rotational mechanism"/>
    <property type="evidence" value="ECO:0007669"/>
    <property type="project" value="InterPro"/>
</dbReference>
<dbReference type="GO" id="GO:0042777">
    <property type="term" value="P:proton motive force-driven plasma membrane ATP synthesis"/>
    <property type="evidence" value="ECO:0007669"/>
    <property type="project" value="UniProtKB-UniRule"/>
</dbReference>
<dbReference type="Gene3D" id="6.10.140.810">
    <property type="match status" value="1"/>
</dbReference>
<dbReference type="Gene3D" id="3.40.50.10580">
    <property type="entry name" value="ATPase, V1 complex, subunit F"/>
    <property type="match status" value="1"/>
</dbReference>
<dbReference type="HAMAP" id="MF_00312">
    <property type="entry name" value="ATP_synth_F_arch"/>
    <property type="match status" value="1"/>
</dbReference>
<dbReference type="InterPro" id="IPR008218">
    <property type="entry name" value="ATPase_V1-cplx_f_g_su"/>
</dbReference>
<dbReference type="InterPro" id="IPR022944">
    <property type="entry name" value="ATPase_V1-cplx_fsu_bac/arc"/>
</dbReference>
<dbReference type="InterPro" id="IPR036906">
    <property type="entry name" value="ATPase_V1_fsu_sf"/>
</dbReference>
<dbReference type="Pfam" id="PF01990">
    <property type="entry name" value="ATP-synt_F"/>
    <property type="match status" value="1"/>
</dbReference>
<dbReference type="SUPFAM" id="SSF159468">
    <property type="entry name" value="AtpF-like"/>
    <property type="match status" value="1"/>
</dbReference>
<comment type="function">
    <text>Produces ATP from ADP in the presence of a proton gradient across the membrane.</text>
</comment>
<comment type="similarity">
    <text evidence="1">Belongs to the V-ATPase F subunit family.</text>
</comment>
<organism>
    <name type="scientific">Thermus thermophilus (strain ATCC 27634 / DSM 579 / HB8)</name>
    <dbReference type="NCBI Taxonomy" id="300852"/>
    <lineage>
        <taxon>Bacteria</taxon>
        <taxon>Thermotogati</taxon>
        <taxon>Deinococcota</taxon>
        <taxon>Deinococci</taxon>
        <taxon>Thermales</taxon>
        <taxon>Thermaceae</taxon>
        <taxon>Thermus</taxon>
    </lineage>
</organism>
<proteinExistence type="evidence at protein level"/>
<sequence>MAVIADPETAQGFRLAGLEGYGASSAEEAQSLLETLVERGGYALVAVDEALLPDPERAVERLMRGRDLPVLLPIAGLKEAFQGHDVEGYMRELVRKTIGFDIKL</sequence>
<keyword id="KW-0002">3D-structure</keyword>
<keyword id="KW-0066">ATP synthesis</keyword>
<keyword id="KW-0375">Hydrogen ion transport</keyword>
<keyword id="KW-0406">Ion transport</keyword>
<keyword id="KW-1185">Reference proteome</keyword>
<keyword id="KW-0813">Transport</keyword>
<accession>P74903</accession>
<accession>Q5SIU0</accession>
<evidence type="ECO:0000305" key="1"/>
<evidence type="ECO:0007829" key="2">
    <source>
        <dbReference type="PDB" id="2D00"/>
    </source>
</evidence>
<feature type="chain" id="PRO_0000144829" description="V-type ATP synthase subunit F">
    <location>
        <begin position="1"/>
        <end position="104"/>
    </location>
</feature>
<feature type="strand" evidence="2">
    <location>
        <begin position="1"/>
        <end position="5"/>
    </location>
</feature>
<feature type="helix" evidence="2">
    <location>
        <begin position="7"/>
        <end position="15"/>
    </location>
</feature>
<feature type="strand" evidence="2">
    <location>
        <begin position="18"/>
        <end position="22"/>
    </location>
</feature>
<feature type="helix" evidence="2">
    <location>
        <begin position="26"/>
        <end position="39"/>
    </location>
</feature>
<feature type="strand" evidence="2">
    <location>
        <begin position="43"/>
        <end position="48"/>
    </location>
</feature>
<feature type="turn" evidence="2">
    <location>
        <begin position="49"/>
        <end position="51"/>
    </location>
</feature>
<feature type="helix" evidence="2">
    <location>
        <begin position="55"/>
        <end position="62"/>
    </location>
</feature>
<feature type="strand" evidence="2">
    <location>
        <begin position="70"/>
        <end position="75"/>
    </location>
</feature>
<feature type="helix" evidence="2">
    <location>
        <begin position="77"/>
        <end position="81"/>
    </location>
</feature>
<feature type="strand" evidence="2">
    <location>
        <begin position="82"/>
        <end position="84"/>
    </location>
</feature>
<feature type="helix" evidence="2">
    <location>
        <begin position="86"/>
        <end position="98"/>
    </location>
</feature>
<name>VATF_THET8</name>